<reference key="1">
    <citation type="journal article" date="2000" name="J. Biol. Chem.">
        <title>Gamma1- and gamma2-syntrophins, two novel dystrophin-binding proteins localized in neuronal cells.</title>
        <authorList>
            <person name="Piluso G."/>
            <person name="Mirabella M."/>
            <person name="Ricci E."/>
            <person name="Belsito A."/>
            <person name="Abbondanza C."/>
            <person name="Servidei S."/>
            <person name="Puca A.A."/>
            <person name="Tonali P."/>
            <person name="Puca G.A."/>
            <person name="Nigro V."/>
        </authorList>
    </citation>
    <scope>NUCLEOTIDE SEQUENCE [MRNA] (ISOFORMS 1 AND 2)</scope>
    <scope>TISSUE SPECIFICITY</scope>
    <scope>INTERACTION WITH DMD; DTNA AND DTNB</scope>
    <source>
        <tissue>Fetal brain</tissue>
        <tissue>Neuron</tissue>
    </source>
</reference>
<reference key="2">
    <citation type="journal article" date="2007" name="BMC Genomics">
        <title>The full-ORF clone resource of the German cDNA consortium.</title>
        <authorList>
            <person name="Bechtel S."/>
            <person name="Rosenfelder H."/>
            <person name="Duda A."/>
            <person name="Schmidt C.P."/>
            <person name="Ernst U."/>
            <person name="Wellenreuther R."/>
            <person name="Mehrle A."/>
            <person name="Schuster C."/>
            <person name="Bahr A."/>
            <person name="Bloecker H."/>
            <person name="Heubner D."/>
            <person name="Hoerlein A."/>
            <person name="Michel G."/>
            <person name="Wedler H."/>
            <person name="Koehrer K."/>
            <person name="Ottenwaelder B."/>
            <person name="Poustka A."/>
            <person name="Wiemann S."/>
            <person name="Schupp I."/>
        </authorList>
    </citation>
    <scope>NUCLEOTIDE SEQUENCE [LARGE SCALE MRNA] (ISOFORM 1)</scope>
    <source>
        <tissue>Amygdala</tissue>
    </source>
</reference>
<reference key="3">
    <citation type="journal article" date="2004" name="Genome Res.">
        <title>The status, quality, and expansion of the NIH full-length cDNA project: the Mammalian Gene Collection (MGC).</title>
        <authorList>
            <consortium name="The MGC Project Team"/>
        </authorList>
    </citation>
    <scope>NUCLEOTIDE SEQUENCE [LARGE SCALE MRNA] (ISOFORM 1)</scope>
    <source>
        <tissue>Brain</tissue>
    </source>
</reference>
<reference key="4">
    <citation type="journal article" date="2001" name="J. Biol. Chem.">
        <title>Interaction of gamma 1-syntrophin with diacylglycerol kinase-zeta. Regulation of nuclear localization by PDZ interactions.</title>
        <authorList>
            <person name="Hogan A."/>
            <person name="Shepherd L."/>
            <person name="Chabot J."/>
            <person name="Quenneville S."/>
            <person name="Prescott S.M."/>
            <person name="Topham M.K."/>
            <person name="Gee S.H."/>
        </authorList>
    </citation>
    <scope>INTERACTION WITH DGKZ</scope>
</reference>
<name>SNTG1_HUMAN</name>
<keyword id="KW-0002">3D-structure</keyword>
<keyword id="KW-0009">Actin-binding</keyword>
<keyword id="KW-0025">Alternative splicing</keyword>
<keyword id="KW-0963">Cytoplasm</keyword>
<keyword id="KW-0206">Cytoskeleton</keyword>
<keyword id="KW-0539">Nucleus</keyword>
<keyword id="KW-1267">Proteomics identification</keyword>
<keyword id="KW-1185">Reference proteome</keyword>
<proteinExistence type="evidence at protein level"/>
<sequence>MDFRTACEETKTGICLLQDGNQEPFKVRLHLAKDILMIQEQDVICVSGEPFYSGERTVTIRRQTVGGFGLSIKGGAEHNIPVVVSKISKEQRAELSGLLFIGDAILQINGINVRKCRHEEVVQVLRNAGEEVTLTVSFLKRAPAFLKLPLNEDCACAPSDQSSGTSSPLCDSGLHLNYHPNNTDTLSCSSWPTSPGLRWEKRWCDLRLIPLLHSRFSQYVPGTDLSRQNAFQVIAVDGVCTGIIQCLSAEDCVDWLQAIATNISNLTKHNIKKINRNFPVNQQIVYMGWCEAREQDPLQDRVYSPTFLALRGSCLYKFLAPPVTTWDWTRAEKTFSVYEIMCKILKDSDLLDRRKQCFTVQSESGEDLYFSVELESDLAQWERAFQTATFLEVERIQCKTYACVLESHLMGLTIDFSTGFICFDAATKAVLWRYKFSQLKGSSDDGKSKIKFLFQNPDTKQIEAKELEFSNLFAVLHCIHSFFAAKVACLDPLFLGNQATASTAASSATTSKAKYTT</sequence>
<dbReference type="EMBL" id="AJ003030">
    <property type="protein sequence ID" value="CAB92968.1"/>
    <property type="molecule type" value="mRNA"/>
</dbReference>
<dbReference type="EMBL" id="AL161971">
    <property type="protein sequence ID" value="CAB82311.1"/>
    <property type="molecule type" value="mRNA"/>
</dbReference>
<dbReference type="EMBL" id="BC075072">
    <property type="protein sequence ID" value="AAH75072.1"/>
    <property type="molecule type" value="mRNA"/>
</dbReference>
<dbReference type="EMBL" id="BC104829">
    <property type="protein sequence ID" value="AAI04830.1"/>
    <property type="molecule type" value="mRNA"/>
</dbReference>
<dbReference type="CCDS" id="CCDS6147.1">
    <molecule id="Q9NSN8-1"/>
</dbReference>
<dbReference type="CCDS" id="CCDS75737.1">
    <molecule id="Q9NSN8-2"/>
</dbReference>
<dbReference type="PIR" id="T47134">
    <property type="entry name" value="T47134"/>
</dbReference>
<dbReference type="RefSeq" id="NP_001274742.1">
    <molecule id="Q9NSN8-1"/>
    <property type="nucleotide sequence ID" value="NM_001287813.3"/>
</dbReference>
<dbReference type="RefSeq" id="NP_001274743.1">
    <molecule id="Q9NSN8-2"/>
    <property type="nucleotide sequence ID" value="NM_001287814.3"/>
</dbReference>
<dbReference type="RefSeq" id="NP_001308702.1">
    <molecule id="Q9NSN8-1"/>
    <property type="nucleotide sequence ID" value="NM_001321773.2"/>
</dbReference>
<dbReference type="RefSeq" id="NP_001308705.1">
    <property type="nucleotide sequence ID" value="NM_001321776.1"/>
</dbReference>
<dbReference type="RefSeq" id="NP_001308706.1">
    <property type="nucleotide sequence ID" value="NM_001321777.1"/>
</dbReference>
<dbReference type="RefSeq" id="NP_061840.1">
    <molecule id="Q9NSN8-1"/>
    <property type="nucleotide sequence ID" value="NM_018967.5"/>
</dbReference>
<dbReference type="RefSeq" id="XP_016869068.1">
    <molecule id="Q9NSN8-1"/>
    <property type="nucleotide sequence ID" value="XM_017013579.2"/>
</dbReference>
<dbReference type="RefSeq" id="XP_016869069.1">
    <molecule id="Q9NSN8-1"/>
    <property type="nucleotide sequence ID" value="XM_017013580.3"/>
</dbReference>
<dbReference type="RefSeq" id="XP_024302951.1">
    <molecule id="Q9NSN8-1"/>
    <property type="nucleotide sequence ID" value="XM_024447183.2"/>
</dbReference>
<dbReference type="RefSeq" id="XP_047277852.1">
    <molecule id="Q9NSN8-1"/>
    <property type="nucleotide sequence ID" value="XM_047421896.1"/>
</dbReference>
<dbReference type="RefSeq" id="XP_054216672.1">
    <molecule id="Q9NSN8-1"/>
    <property type="nucleotide sequence ID" value="XM_054360697.1"/>
</dbReference>
<dbReference type="RefSeq" id="XP_054216673.1">
    <molecule id="Q9NSN8-1"/>
    <property type="nucleotide sequence ID" value="XM_054360698.1"/>
</dbReference>
<dbReference type="RefSeq" id="XP_054216674.1">
    <molecule id="Q9NSN8-1"/>
    <property type="nucleotide sequence ID" value="XM_054360699.1"/>
</dbReference>
<dbReference type="RefSeq" id="XP_054216675.1">
    <molecule id="Q9NSN8-1"/>
    <property type="nucleotide sequence ID" value="XM_054360700.1"/>
</dbReference>
<dbReference type="PDB" id="7PC7">
    <property type="method" value="X-ray"/>
    <property type="resolution" value="2.10 A"/>
    <property type="chains" value="A/B=54-143"/>
</dbReference>
<dbReference type="PDB" id="7PC8">
    <property type="method" value="X-ray"/>
    <property type="resolution" value="2.50 A"/>
    <property type="chains" value="A/B=54-143"/>
</dbReference>
<dbReference type="PDB" id="7QQN">
    <property type="method" value="X-ray"/>
    <property type="resolution" value="2.45 A"/>
    <property type="chains" value="A/C=54-143"/>
</dbReference>
<dbReference type="PDBsum" id="7PC7"/>
<dbReference type="PDBsum" id="7PC8"/>
<dbReference type="PDBsum" id="7QQN"/>
<dbReference type="SMR" id="Q9NSN8"/>
<dbReference type="BioGRID" id="119928">
    <property type="interactions" value="31"/>
</dbReference>
<dbReference type="ComplexPortal" id="CPX-2453">
    <property type="entry name" value="Dystrophin glycoprotein complex, CNS variant"/>
</dbReference>
<dbReference type="CORUM" id="Q9NSN8"/>
<dbReference type="FunCoup" id="Q9NSN8">
    <property type="interactions" value="911"/>
</dbReference>
<dbReference type="IntAct" id="Q9NSN8">
    <property type="interactions" value="21"/>
</dbReference>
<dbReference type="STRING" id="9606.ENSP00000493900"/>
<dbReference type="iPTMnet" id="Q9NSN8"/>
<dbReference type="PhosphoSitePlus" id="Q9NSN8"/>
<dbReference type="BioMuta" id="SNTG1"/>
<dbReference type="DMDM" id="23822220"/>
<dbReference type="MassIVE" id="Q9NSN8"/>
<dbReference type="PaxDb" id="9606-ENSP00000429842"/>
<dbReference type="PeptideAtlas" id="Q9NSN8"/>
<dbReference type="ProteomicsDB" id="82570">
    <molecule id="Q9NSN8-1"/>
</dbReference>
<dbReference type="ProteomicsDB" id="82571">
    <molecule id="Q9NSN8-2"/>
</dbReference>
<dbReference type="Antibodypedia" id="24371">
    <property type="antibodies" value="117 antibodies from 22 providers"/>
</dbReference>
<dbReference type="DNASU" id="54212"/>
<dbReference type="Ensembl" id="ENST00000517473.5">
    <molecule id="Q9NSN8-2"/>
    <property type="protein sequence ID" value="ENSP00000431123.1"/>
    <property type="gene ID" value="ENSG00000147481.17"/>
</dbReference>
<dbReference type="Ensembl" id="ENST00000518864.5">
    <molecule id="Q9NSN8-1"/>
    <property type="protein sequence ID" value="ENSP00000429276.1"/>
    <property type="gene ID" value="ENSG00000147481.17"/>
</dbReference>
<dbReference type="Ensembl" id="ENST00000642720.2">
    <molecule id="Q9NSN8-1"/>
    <property type="protein sequence ID" value="ENSP00000493900.1"/>
    <property type="gene ID" value="ENSG00000147481.17"/>
</dbReference>
<dbReference type="GeneID" id="54212"/>
<dbReference type="KEGG" id="hsa:54212"/>
<dbReference type="MANE-Select" id="ENST00000642720.2">
    <property type="protein sequence ID" value="ENSP00000493900.1"/>
    <property type="RefSeq nucleotide sequence ID" value="NM_018967.5"/>
    <property type="RefSeq protein sequence ID" value="NP_061840.1"/>
</dbReference>
<dbReference type="UCSC" id="uc003xqs.3">
    <molecule id="Q9NSN8-1"/>
    <property type="organism name" value="human"/>
</dbReference>
<dbReference type="AGR" id="HGNC:13740"/>
<dbReference type="CTD" id="54212"/>
<dbReference type="DisGeNET" id="54212"/>
<dbReference type="GeneCards" id="SNTG1"/>
<dbReference type="HGNC" id="HGNC:13740">
    <property type="gene designation" value="SNTG1"/>
</dbReference>
<dbReference type="HPA" id="ENSG00000147481">
    <property type="expression patterns" value="Tissue enhanced (brain, lymphoid tissue)"/>
</dbReference>
<dbReference type="MIM" id="608714">
    <property type="type" value="gene"/>
</dbReference>
<dbReference type="neXtProt" id="NX_Q9NSN8"/>
<dbReference type="OpenTargets" id="ENSG00000147481"/>
<dbReference type="PharmGKB" id="PA37806"/>
<dbReference type="VEuPathDB" id="HostDB:ENSG00000147481"/>
<dbReference type="eggNOG" id="KOG3549">
    <property type="taxonomic scope" value="Eukaryota"/>
</dbReference>
<dbReference type="GeneTree" id="ENSGT00950000182863"/>
<dbReference type="HOGENOM" id="CLU_039445_0_0_1"/>
<dbReference type="InParanoid" id="Q9NSN8"/>
<dbReference type="OMA" id="WCEAREP"/>
<dbReference type="OrthoDB" id="9975356at2759"/>
<dbReference type="PAN-GO" id="Q9NSN8">
    <property type="GO annotations" value="2 GO annotations based on evolutionary models"/>
</dbReference>
<dbReference type="PhylomeDB" id="Q9NSN8"/>
<dbReference type="TreeFam" id="TF317932"/>
<dbReference type="PathwayCommons" id="Q9NSN8"/>
<dbReference type="SignaLink" id="Q9NSN8"/>
<dbReference type="SIGNOR" id="Q9NSN8"/>
<dbReference type="BioGRID-ORCS" id="54212">
    <property type="hits" value="7 hits in 1151 CRISPR screens"/>
</dbReference>
<dbReference type="ChiTaRS" id="SNTG1">
    <property type="organism name" value="human"/>
</dbReference>
<dbReference type="GeneWiki" id="SNTG1"/>
<dbReference type="GenomeRNAi" id="54212"/>
<dbReference type="Pharos" id="Q9NSN8">
    <property type="development level" value="Tbio"/>
</dbReference>
<dbReference type="PRO" id="PR:Q9NSN8"/>
<dbReference type="Proteomes" id="UP000005640">
    <property type="component" value="Chromosome 8"/>
</dbReference>
<dbReference type="RNAct" id="Q9NSN8">
    <property type="molecule type" value="protein"/>
</dbReference>
<dbReference type="Bgee" id="ENSG00000147481">
    <property type="expression patterns" value="Expressed in Brodmann (1909) area 23 and 107 other cell types or tissues"/>
</dbReference>
<dbReference type="ExpressionAtlas" id="Q9NSN8">
    <property type="expression patterns" value="baseline and differential"/>
</dbReference>
<dbReference type="GO" id="GO:0005737">
    <property type="term" value="C:cytoplasm"/>
    <property type="evidence" value="ECO:0000314"/>
    <property type="project" value="UniProtKB"/>
</dbReference>
<dbReference type="GO" id="GO:0005856">
    <property type="term" value="C:cytoskeleton"/>
    <property type="evidence" value="ECO:0000314"/>
    <property type="project" value="LIFEdb"/>
</dbReference>
<dbReference type="GO" id="GO:0016010">
    <property type="term" value="C:dystrophin-associated glycoprotein complex"/>
    <property type="evidence" value="ECO:0000318"/>
    <property type="project" value="GO_Central"/>
</dbReference>
<dbReference type="GO" id="GO:0005634">
    <property type="term" value="C:nucleus"/>
    <property type="evidence" value="ECO:0007669"/>
    <property type="project" value="UniProtKB-SubCell"/>
</dbReference>
<dbReference type="GO" id="GO:0032587">
    <property type="term" value="C:ruffle membrane"/>
    <property type="evidence" value="ECO:0000314"/>
    <property type="project" value="UniProtKB"/>
</dbReference>
<dbReference type="GO" id="GO:0016013">
    <property type="term" value="C:syntrophin complex"/>
    <property type="evidence" value="ECO:0000304"/>
    <property type="project" value="ProtInc"/>
</dbReference>
<dbReference type="GO" id="GO:0003779">
    <property type="term" value="F:actin binding"/>
    <property type="evidence" value="ECO:0007669"/>
    <property type="project" value="UniProtKB-KW"/>
</dbReference>
<dbReference type="GO" id="GO:0005198">
    <property type="term" value="F:structural molecule activity"/>
    <property type="evidence" value="ECO:0007669"/>
    <property type="project" value="InterPro"/>
</dbReference>
<dbReference type="GO" id="GO:0007154">
    <property type="term" value="P:cell communication"/>
    <property type="evidence" value="ECO:0000304"/>
    <property type="project" value="ProtInc"/>
</dbReference>
<dbReference type="CDD" id="cd06801">
    <property type="entry name" value="PDZ_syntrophin-like"/>
    <property type="match status" value="1"/>
</dbReference>
<dbReference type="CDD" id="cd00821">
    <property type="entry name" value="PH"/>
    <property type="match status" value="1"/>
</dbReference>
<dbReference type="FunFam" id="2.30.29.30:FF:000448">
    <property type="entry name" value="Syntrophin gamma 1"/>
    <property type="match status" value="1"/>
</dbReference>
<dbReference type="FunFam" id="2.30.42.10:FF:000080">
    <property type="entry name" value="Syntrophin gamma 1"/>
    <property type="match status" value="1"/>
</dbReference>
<dbReference type="Gene3D" id="2.30.42.10">
    <property type="match status" value="1"/>
</dbReference>
<dbReference type="InterPro" id="IPR001478">
    <property type="entry name" value="PDZ"/>
</dbReference>
<dbReference type="InterPro" id="IPR036034">
    <property type="entry name" value="PDZ_sf"/>
</dbReference>
<dbReference type="InterPro" id="IPR001849">
    <property type="entry name" value="PH_domain"/>
</dbReference>
<dbReference type="InterPro" id="IPR015482">
    <property type="entry name" value="Syntrophin"/>
</dbReference>
<dbReference type="InterPro" id="IPR055108">
    <property type="entry name" value="Syntrophin_4th"/>
</dbReference>
<dbReference type="PANTHER" id="PTHR10554:SF2">
    <property type="entry name" value="GAMMA-1-SYNTROPHIN"/>
    <property type="match status" value="1"/>
</dbReference>
<dbReference type="PANTHER" id="PTHR10554">
    <property type="entry name" value="SYNTROPHIN"/>
    <property type="match status" value="1"/>
</dbReference>
<dbReference type="Pfam" id="PF00595">
    <property type="entry name" value="PDZ"/>
    <property type="match status" value="1"/>
</dbReference>
<dbReference type="Pfam" id="PF23012">
    <property type="entry name" value="Syntrophin_4th"/>
    <property type="match status" value="1"/>
</dbReference>
<dbReference type="SMART" id="SM00228">
    <property type="entry name" value="PDZ"/>
    <property type="match status" value="1"/>
</dbReference>
<dbReference type="SMART" id="SM00233">
    <property type="entry name" value="PH"/>
    <property type="match status" value="2"/>
</dbReference>
<dbReference type="SUPFAM" id="SSF50156">
    <property type="entry name" value="PDZ domain-like"/>
    <property type="match status" value="1"/>
</dbReference>
<dbReference type="SUPFAM" id="SSF50729">
    <property type="entry name" value="PH domain-like"/>
    <property type="match status" value="2"/>
</dbReference>
<dbReference type="PROSITE" id="PS50106">
    <property type="entry name" value="PDZ"/>
    <property type="match status" value="1"/>
</dbReference>
<dbReference type="PROSITE" id="PS50003">
    <property type="entry name" value="PH_DOMAIN"/>
    <property type="match status" value="1"/>
</dbReference>
<accession>Q9NSN8</accession>
<accession>Q2M3Q0</accession>
<accession>Q9NY98</accession>
<protein>
    <recommendedName>
        <fullName>Gamma-1-syntrophin</fullName>
        <shortName>G1SYN</shortName>
    </recommendedName>
    <alternativeName>
        <fullName>Syntrophin-4</fullName>
        <shortName>SYN4</shortName>
    </alternativeName>
</protein>
<feature type="chain" id="PRO_0000184013" description="Gamma-1-syntrophin">
    <location>
        <begin position="1"/>
        <end position="517"/>
    </location>
</feature>
<feature type="domain" description="PDZ" evidence="2">
    <location>
        <begin position="57"/>
        <end position="140"/>
    </location>
</feature>
<feature type="domain" description="PH" evidence="3">
    <location>
        <begin position="283"/>
        <end position="390"/>
    </location>
</feature>
<feature type="splice variant" id="VSP_006360" description="In isoform 2." evidence="6">
    <location>
        <begin position="428"/>
        <end position="464"/>
    </location>
</feature>
<feature type="strand" evidence="8">
    <location>
        <begin position="56"/>
        <end position="61"/>
    </location>
</feature>
<feature type="strand" evidence="8">
    <location>
        <begin position="64"/>
        <end position="66"/>
    </location>
</feature>
<feature type="strand" evidence="8">
    <location>
        <begin position="69"/>
        <end position="73"/>
    </location>
</feature>
<feature type="helix" evidence="8">
    <location>
        <begin position="76"/>
        <end position="78"/>
    </location>
</feature>
<feature type="strand" evidence="8">
    <location>
        <begin position="83"/>
        <end position="87"/>
    </location>
</feature>
<feature type="helix" evidence="8">
    <location>
        <begin position="89"/>
        <end position="94"/>
    </location>
</feature>
<feature type="turn" evidence="9">
    <location>
        <begin position="95"/>
        <end position="98"/>
    </location>
</feature>
<feature type="strand" evidence="8">
    <location>
        <begin position="103"/>
        <end position="108"/>
    </location>
</feature>
<feature type="helix" evidence="8">
    <location>
        <begin position="118"/>
        <end position="126"/>
    </location>
</feature>
<feature type="strand" evidence="8">
    <location>
        <begin position="130"/>
        <end position="138"/>
    </location>
</feature>
<evidence type="ECO:0000250" key="1"/>
<evidence type="ECO:0000255" key="2">
    <source>
        <dbReference type="PROSITE-ProRule" id="PRU00143"/>
    </source>
</evidence>
<evidence type="ECO:0000255" key="3">
    <source>
        <dbReference type="PROSITE-ProRule" id="PRU00145"/>
    </source>
</evidence>
<evidence type="ECO:0000269" key="4">
    <source>
    </source>
</evidence>
<evidence type="ECO:0000269" key="5">
    <source>
    </source>
</evidence>
<evidence type="ECO:0000303" key="6">
    <source>
    </source>
</evidence>
<evidence type="ECO:0000305" key="7"/>
<evidence type="ECO:0007829" key="8">
    <source>
        <dbReference type="PDB" id="7PC7"/>
    </source>
</evidence>
<evidence type="ECO:0007829" key="9">
    <source>
        <dbReference type="PDB" id="7QQN"/>
    </source>
</evidence>
<comment type="function">
    <text evidence="1">Adapter protein that binds to and probably organizes the subcellular localization of a variety of proteins. May link various receptors to the actin cytoskeleton and the dystrophin glycoprotein complex (By similarity). May participate in regulating the subcellular location of diacylglycerol kinase-zeta to ensure that diacylglycerol is rapidly inactivated following receptor activation.</text>
</comment>
<comment type="subunit">
    <text evidence="4 5">Isoform 1, but not isoform 2, interacts with the dystrophin protein DMD and related proteins DTNA and DTNB. Interacts with DGKZ.</text>
</comment>
<comment type="interaction">
    <interactant intactId="EBI-19763427">
        <id>Q9NSN8</id>
    </interactant>
    <interactant intactId="EBI-4401947">
        <id>Q9HB19</id>
        <label>PLEKHA2</label>
    </interactant>
    <organismsDiffer>false</organismsDiffer>
    <experiments>3</experiments>
</comment>
<comment type="interaction">
    <interactant intactId="EBI-19763427">
        <id>Q9NSN8</id>
    </interactant>
    <interactant intactId="EBI-1036653">
        <id>P04004</id>
        <label>VTN</label>
    </interactant>
    <organismsDiffer>false</organismsDiffer>
    <experiments>3</experiments>
</comment>
<comment type="subcellular location">
    <subcellularLocation>
        <location>Cytoplasm</location>
        <location>Cytoskeleton</location>
    </subcellularLocation>
    <subcellularLocation>
        <location>Nucleus</location>
    </subcellularLocation>
    <text>Mainly cytoplasmic and weakly nuclear.</text>
</comment>
<comment type="alternative products">
    <event type="alternative splicing"/>
    <isoform>
        <id>Q9NSN8-1</id>
        <name>1</name>
        <sequence type="displayed"/>
    </isoform>
    <isoform>
        <id>Q9NSN8-2</id>
        <name>2</name>
        <sequence type="described" ref="VSP_006360"/>
    </isoform>
</comment>
<comment type="tissue specificity">
    <text evidence="4">Brain specific. In CNS, it is expressed in the perikaryon and proximal portion of the neuronal processes. Strong expression in the hippocampus, neuron-rich dendate granule cells, and pyramidal cell layers. Highly expressed in neurons of the cerebral cortex. Also expressed in the cerebellar cortex, deep cerebellar nuclei, thalamus, and basal ganglia. No expression in muscle cells.</text>
</comment>
<comment type="domain">
    <text>The PDZ domain binds to the last three or four amino acids of DGKZ. The association with dystrophin or related proteins probably leaves the PDZ domain available to recruit proteins to the membrane.</text>
</comment>
<comment type="similarity">
    <text evidence="7">Belongs to the syntrophin family.</text>
</comment>
<organism>
    <name type="scientific">Homo sapiens</name>
    <name type="common">Human</name>
    <dbReference type="NCBI Taxonomy" id="9606"/>
    <lineage>
        <taxon>Eukaryota</taxon>
        <taxon>Metazoa</taxon>
        <taxon>Chordata</taxon>
        <taxon>Craniata</taxon>
        <taxon>Vertebrata</taxon>
        <taxon>Euteleostomi</taxon>
        <taxon>Mammalia</taxon>
        <taxon>Eutheria</taxon>
        <taxon>Euarchontoglires</taxon>
        <taxon>Primates</taxon>
        <taxon>Haplorrhini</taxon>
        <taxon>Catarrhini</taxon>
        <taxon>Hominidae</taxon>
        <taxon>Homo</taxon>
    </lineage>
</organism>
<gene>
    <name type="primary">SNTG1</name>
</gene>